<comment type="function">
    <text evidence="2">Binds fibroblast growth factor and E-selectin (cell-adhesion lectin on endothelial cells mediating the binding of neutrophils).</text>
</comment>
<comment type="subcellular location">
    <subcellularLocation>
        <location evidence="5">Golgi apparatus membrane</location>
        <topology evidence="3">Single-pass type I membrane protein</topology>
    </subcellularLocation>
    <subcellularLocation>
        <location evidence="6">Golgi outpost</location>
    </subcellularLocation>
    <subcellularLocation>
        <location evidence="6">Cytoplasm</location>
        <location evidence="6">Cytoskeleton</location>
        <location evidence="6">Microtubule organizing center</location>
    </subcellularLocation>
    <text evidence="5 6">Golgi medial cisternae (PubMed:2909545). Localizes to the postsynaptic Golgi apparatus region, also named Golgi outpost, which shapes dendrite morphology by functioning as sites of acentrosomal microtubule nucleation (PubMed:31522887).</text>
</comment>
<comment type="tissue specificity">
    <text evidence="5">Widely expressed; found in kidney, pancreatic islets, parathyroid, thyroid, adrenal tissue, brain neurons, astrocytes, adenohypophysis, cultured pheochromocytoma cells.</text>
</comment>
<comment type="PTM">
    <text evidence="1">Fucosylation is essential for binding to E-selectin.</text>
</comment>
<comment type="PTM">
    <text evidence="5">N-glycosylated. Contains sialic acid residues.</text>
</comment>
<organism>
    <name type="scientific">Rattus norvegicus</name>
    <name type="common">Rat</name>
    <dbReference type="NCBI Taxonomy" id="10116"/>
    <lineage>
        <taxon>Eukaryota</taxon>
        <taxon>Metazoa</taxon>
        <taxon>Chordata</taxon>
        <taxon>Craniata</taxon>
        <taxon>Vertebrata</taxon>
        <taxon>Euteleostomi</taxon>
        <taxon>Mammalia</taxon>
        <taxon>Eutheria</taxon>
        <taxon>Euarchontoglires</taxon>
        <taxon>Glires</taxon>
        <taxon>Rodentia</taxon>
        <taxon>Myomorpha</taxon>
        <taxon>Muroidea</taxon>
        <taxon>Muridae</taxon>
        <taxon>Murinae</taxon>
        <taxon>Rattus</taxon>
    </lineage>
</organism>
<protein>
    <recommendedName>
        <fullName>Golgi apparatus protein 1</fullName>
    </recommendedName>
    <alternativeName>
        <fullName>E-selectin ligand 1</fullName>
        <shortName>ESL-1</shortName>
    </alternativeName>
    <alternativeName>
        <fullName evidence="7">Golgi sialoglycoprotein MG-160</fullName>
    </alternativeName>
</protein>
<accession>Q62638</accession>
<dbReference type="EMBL" id="U08136">
    <property type="protein sequence ID" value="AAB03365.1"/>
    <property type="molecule type" value="mRNA"/>
</dbReference>
<dbReference type="RefSeq" id="NP_058907.1">
    <property type="nucleotide sequence ID" value="NM_017211.2"/>
</dbReference>
<dbReference type="SMR" id="Q62638"/>
<dbReference type="BioGRID" id="248118">
    <property type="interactions" value="2"/>
</dbReference>
<dbReference type="FunCoup" id="Q62638">
    <property type="interactions" value="4034"/>
</dbReference>
<dbReference type="IntAct" id="Q62638">
    <property type="interactions" value="1"/>
</dbReference>
<dbReference type="STRING" id="10116.ENSRNOP00000025570"/>
<dbReference type="CarbonylDB" id="Q62638"/>
<dbReference type="GlyCosmos" id="Q62638">
    <property type="glycosylation" value="5 sites, No reported glycans"/>
</dbReference>
<dbReference type="GlyGen" id="Q62638">
    <property type="glycosylation" value="6 sites"/>
</dbReference>
<dbReference type="iPTMnet" id="Q62638"/>
<dbReference type="PhosphoSitePlus" id="Q62638"/>
<dbReference type="SwissPalm" id="Q62638"/>
<dbReference type="jPOST" id="Q62638"/>
<dbReference type="PaxDb" id="10116-ENSRNOP00000025570"/>
<dbReference type="GeneID" id="29476"/>
<dbReference type="KEGG" id="rno:29476"/>
<dbReference type="UCSC" id="RGD:69345">
    <property type="organism name" value="rat"/>
</dbReference>
<dbReference type="AGR" id="RGD:69345"/>
<dbReference type="CTD" id="2734"/>
<dbReference type="RGD" id="69345">
    <property type="gene designation" value="Glg1"/>
</dbReference>
<dbReference type="eggNOG" id="KOG3648">
    <property type="taxonomic scope" value="Eukaryota"/>
</dbReference>
<dbReference type="InParanoid" id="Q62638"/>
<dbReference type="PhylomeDB" id="Q62638"/>
<dbReference type="Reactome" id="R-RNO-202733">
    <property type="pathway name" value="Cell surface interactions at the vascular wall"/>
</dbReference>
<dbReference type="PRO" id="PR:Q62638"/>
<dbReference type="Proteomes" id="UP000002494">
    <property type="component" value="Unplaced"/>
</dbReference>
<dbReference type="GO" id="GO:0031012">
    <property type="term" value="C:extracellular matrix"/>
    <property type="evidence" value="ECO:0000266"/>
    <property type="project" value="RGD"/>
</dbReference>
<dbReference type="GO" id="GO:0005794">
    <property type="term" value="C:Golgi apparatus"/>
    <property type="evidence" value="ECO:0000266"/>
    <property type="project" value="RGD"/>
</dbReference>
<dbReference type="GO" id="GO:0005797">
    <property type="term" value="C:Golgi medial cisterna"/>
    <property type="evidence" value="ECO:0000314"/>
    <property type="project" value="RGD"/>
</dbReference>
<dbReference type="GO" id="GO:0000139">
    <property type="term" value="C:Golgi membrane"/>
    <property type="evidence" value="ECO:0000266"/>
    <property type="project" value="RGD"/>
</dbReference>
<dbReference type="GO" id="GO:0005815">
    <property type="term" value="C:microtubule organizing center"/>
    <property type="evidence" value="ECO:0007669"/>
    <property type="project" value="UniProtKB-SubCell"/>
</dbReference>
<dbReference type="GO" id="GO:0017134">
    <property type="term" value="F:fibroblast growth factor binding"/>
    <property type="evidence" value="ECO:0000314"/>
    <property type="project" value="RGD"/>
</dbReference>
<dbReference type="GO" id="GO:0060349">
    <property type="term" value="P:bone morphogenesis"/>
    <property type="evidence" value="ECO:0000266"/>
    <property type="project" value="RGD"/>
</dbReference>
<dbReference type="GO" id="GO:0006886">
    <property type="term" value="P:intracellular protein transport"/>
    <property type="evidence" value="ECO:0000303"/>
    <property type="project" value="RGD"/>
</dbReference>
<dbReference type="GO" id="GO:0010955">
    <property type="term" value="P:negative regulation of protein processing"/>
    <property type="evidence" value="ECO:0000266"/>
    <property type="project" value="RGD"/>
</dbReference>
<dbReference type="GO" id="GO:0030512">
    <property type="term" value="P:negative regulation of transforming growth factor beta receptor signaling pathway"/>
    <property type="evidence" value="ECO:0000266"/>
    <property type="project" value="RGD"/>
</dbReference>
<dbReference type="GO" id="GO:0016485">
    <property type="term" value="P:protein processing"/>
    <property type="evidence" value="ECO:0000266"/>
    <property type="project" value="RGD"/>
</dbReference>
<dbReference type="GO" id="GO:0032330">
    <property type="term" value="P:regulation of chondrocyte differentiation"/>
    <property type="evidence" value="ECO:0000266"/>
    <property type="project" value="RGD"/>
</dbReference>
<dbReference type="GO" id="GO:0007179">
    <property type="term" value="P:transforming growth factor beta receptor signaling pathway"/>
    <property type="evidence" value="ECO:0000266"/>
    <property type="project" value="RGD"/>
</dbReference>
<dbReference type="InterPro" id="IPR001893">
    <property type="entry name" value="Cys-rich_GLG1_repeat"/>
</dbReference>
<dbReference type="InterPro" id="IPR017873">
    <property type="entry name" value="Cys-rich_GLG1_repeat_euk"/>
</dbReference>
<dbReference type="InterPro" id="IPR039728">
    <property type="entry name" value="GLG1"/>
</dbReference>
<dbReference type="PANTHER" id="PTHR11884:SF1">
    <property type="entry name" value="GOLGI APPARATUS PROTEIN 1"/>
    <property type="match status" value="1"/>
</dbReference>
<dbReference type="PANTHER" id="PTHR11884">
    <property type="entry name" value="SELECTIN LIGAND RELATED"/>
    <property type="match status" value="1"/>
</dbReference>
<dbReference type="Pfam" id="PF00839">
    <property type="entry name" value="Cys_rich_FGFR"/>
    <property type="match status" value="15"/>
</dbReference>
<dbReference type="PROSITE" id="PS51289">
    <property type="entry name" value="GLG1_C_RICH"/>
    <property type="match status" value="16"/>
</dbReference>
<evidence type="ECO:0000250" key="1">
    <source>
        <dbReference type="UniProtKB" id="Q61543"/>
    </source>
</evidence>
<evidence type="ECO:0000250" key="2">
    <source>
        <dbReference type="UniProtKB" id="Q92896"/>
    </source>
</evidence>
<evidence type="ECO:0000255" key="3"/>
<evidence type="ECO:0000256" key="4">
    <source>
        <dbReference type="SAM" id="MobiDB-lite"/>
    </source>
</evidence>
<evidence type="ECO:0000269" key="5">
    <source>
    </source>
</evidence>
<evidence type="ECO:0000269" key="6">
    <source>
    </source>
</evidence>
<evidence type="ECO:0000303" key="7">
    <source>
    </source>
</evidence>
<feature type="signal peptide" evidence="3">
    <location>
        <begin position="1"/>
        <end position="32"/>
    </location>
</feature>
<feature type="chain" id="PRO_0000011122" description="Golgi apparatus protein 1">
    <location>
        <begin position="33"/>
        <end position="1171"/>
    </location>
</feature>
<feature type="topological domain" description="Extracellular" evidence="3">
    <location>
        <begin position="33"/>
        <end position="1137"/>
    </location>
</feature>
<feature type="transmembrane region" description="Helical" evidence="3">
    <location>
        <begin position="1138"/>
        <end position="1158"/>
    </location>
</feature>
<feature type="topological domain" description="Cytoplasmic" evidence="3">
    <location>
        <begin position="1159"/>
        <end position="1171"/>
    </location>
</feature>
<feature type="repeat" description="Cys-rich GLG1 1">
    <location>
        <begin position="108"/>
        <end position="141"/>
    </location>
</feature>
<feature type="repeat" description="Cys-rich GLG1 2">
    <location>
        <begin position="142"/>
        <end position="204"/>
    </location>
</feature>
<feature type="repeat" description="Cys-rich GLG1 3">
    <location>
        <begin position="207"/>
        <end position="270"/>
    </location>
</feature>
<feature type="repeat" description="Cys-rich GLG1 4">
    <location>
        <begin position="278"/>
        <end position="338"/>
    </location>
</feature>
<feature type="repeat" description="Cys-rich GLG1 5">
    <location>
        <begin position="339"/>
        <end position="405"/>
    </location>
</feature>
<feature type="repeat" description="Cys-rich GLG1 6">
    <location>
        <begin position="406"/>
        <end position="465"/>
    </location>
</feature>
<feature type="repeat" description="Cys-rich GLG1 7">
    <location>
        <begin position="467"/>
        <end position="529"/>
    </location>
</feature>
<feature type="repeat" description="Cys-rich GLG1 8">
    <location>
        <begin position="530"/>
        <end position="596"/>
    </location>
</feature>
<feature type="repeat" description="Cys-rich GLG1 9">
    <location>
        <begin position="601"/>
        <end position="660"/>
    </location>
</feature>
<feature type="repeat" description="Cys-rich GLG1 10">
    <location>
        <begin position="662"/>
        <end position="720"/>
    </location>
</feature>
<feature type="repeat" description="Cys-rich GLG1 11">
    <location>
        <begin position="721"/>
        <end position="780"/>
    </location>
</feature>
<feature type="repeat" description="Cys-rich GLG1 12">
    <location>
        <begin position="788"/>
        <end position="848"/>
    </location>
</feature>
<feature type="repeat" description="Cys-rich GLG1 13">
    <location>
        <begin position="850"/>
        <end position="903"/>
    </location>
</feature>
<feature type="repeat" description="Cys-rich GLG1 14">
    <location>
        <begin position="904"/>
        <end position="971"/>
    </location>
</feature>
<feature type="repeat" description="Cys-rich GLG1 15">
    <location>
        <begin position="972"/>
        <end position="1027"/>
    </location>
</feature>
<feature type="repeat" description="Cys-rich GLG1 16">
    <location>
        <begin position="1033"/>
        <end position="1093"/>
    </location>
</feature>
<feature type="region of interest" description="Disordered" evidence="4">
    <location>
        <begin position="43"/>
        <end position="105"/>
    </location>
</feature>
<feature type="compositionally biased region" description="Low complexity" evidence="4">
    <location>
        <begin position="54"/>
        <end position="71"/>
    </location>
</feature>
<feature type="compositionally biased region" description="Low complexity" evidence="4">
    <location>
        <begin position="78"/>
        <end position="90"/>
    </location>
</feature>
<feature type="compositionally biased region" description="Gly residues" evidence="4">
    <location>
        <begin position="91"/>
        <end position="102"/>
    </location>
</feature>
<feature type="modified residue" description="Phosphoserine" evidence="1">
    <location>
        <position position="953"/>
    </location>
</feature>
<feature type="glycosylation site" description="N-linked (GlcNAc...) asparagine" evidence="3">
    <location>
        <position position="157"/>
    </location>
</feature>
<feature type="glycosylation site" description="N-linked (GlcNAc...) asparagine" evidence="3">
    <location>
        <position position="202"/>
    </location>
</feature>
<feature type="glycosylation site" description="N-linked (GlcNAc...) asparagine" evidence="3">
    <location>
        <position position="573"/>
    </location>
</feature>
<feature type="glycosylation site" description="N-linked (GlcNAc...) asparagine" evidence="3">
    <location>
        <position position="669"/>
    </location>
</feature>
<feature type="glycosylation site" description="N-linked (GlcNAc...) asparagine" evidence="3">
    <location>
        <position position="778"/>
    </location>
</feature>
<gene>
    <name type="primary">Glg1</name>
    <name type="synonym">Esl1</name>
    <name evidence="7" type="synonym">Mg160</name>
</gene>
<keyword id="KW-0963">Cytoplasm</keyword>
<keyword id="KW-0206">Cytoskeleton</keyword>
<keyword id="KW-0903">Direct protein sequencing</keyword>
<keyword id="KW-0325">Glycoprotein</keyword>
<keyword id="KW-0333">Golgi apparatus</keyword>
<keyword id="KW-0472">Membrane</keyword>
<keyword id="KW-0597">Phosphoprotein</keyword>
<keyword id="KW-1185">Reference proteome</keyword>
<keyword id="KW-0677">Repeat</keyword>
<keyword id="KW-0730">Sialic acid</keyword>
<keyword id="KW-0732">Signal</keyword>
<keyword id="KW-0812">Transmembrane</keyword>
<keyword id="KW-1133">Transmembrane helix</keyword>
<name>GSLG1_RAT</name>
<reference key="1">
    <citation type="journal article" date="1995" name="J. Cell Sci.">
        <title>MG-160, a membrane sialoglycoprotein of the medial cisternae of the rat Golgi apparatus, binds basic fibroblast growth factor and exhibits a high level of sequence identity to a chicken fibroblast growth factor receptor.</title>
        <authorList>
            <person name="Gonatas J.O."/>
            <person name="Mourelatos Z."/>
            <person name="Stieber A."/>
            <person name="Lane W.S."/>
            <person name="Brosius J."/>
            <person name="Gonatas N.K."/>
        </authorList>
    </citation>
    <scope>NUCLEOTIDE SEQUENCE [MRNA]</scope>
    <scope>PROTEIN SEQUENCE OF 90-103; 174-189; 225-241; 494-508; 538-547; 687-700; 993-1010 AND 1104-1115</scope>
    <source>
        <strain>Sprague-Dawley</strain>
        <tissue>Brain cortex</tissue>
    </source>
</reference>
<reference key="2">
    <citation type="journal article" date="1989" name="J. Biol. Chem.">
        <title>MG-160. A novel sialoglycoprotein of the medial cisternae of the Golgi apparatus.</title>
        <authorList>
            <person name="Gonatas J.O."/>
            <person name="Mezitis S.G.E."/>
            <person name="Stieber A."/>
            <person name="Fleischer B."/>
            <person name="Gonatas N.K."/>
        </authorList>
    </citation>
    <scope>GLYCOSYLATION</scope>
    <scope>TISSUE SPECIFICITY</scope>
    <scope>SUBCELLULAR LOCATION</scope>
</reference>
<reference key="3">
    <citation type="journal article" date="2019" name="Cell">
        <title>The Golgi outpost protein TPPP nucleates microtubules and is critical for myelination.</title>
        <authorList>
            <person name="Fu M.M."/>
            <person name="McAlear T.S."/>
            <person name="Nguyen H."/>
            <person name="Oses-Prieto J.A."/>
            <person name="Valenzuela A."/>
            <person name="Shi R.D."/>
            <person name="Perrino J.J."/>
            <person name="Huang T.T."/>
            <person name="Burlingame A.L."/>
            <person name="Bechstedt S."/>
            <person name="Barres B.A."/>
        </authorList>
    </citation>
    <scope>SUBCELLULAR LOCATION</scope>
</reference>
<sequence>MAVCGRVRRMFRLSAALQLLLLVAAGVQNSHGQGQGLGVNFGPFAGQAGGGNPVGQQPPQLPQLSQQQQQQQPPPQQQQPFPAGGLPARRGGAGPGGTGGGWKLAEEESCREDVTRVCPKHTWSNNLAVLECLQDVREPENEISSDCNHLLWNYKLNLTTDPKFESVAREVCKSTISEIKECAEEPVGKGYMVSCLVDHRGNITEYQCHQYITKMTAIIFSDYRLICGFMDDCKNDINLLKCGSIRLGEKDAHSQGEVVSCLEKGLVKEAEEKEPKIQVSELCKKAILRVAELSSDDFHLDRHLYFACRDDRERFCENTQAGEGRVYKCLFNHKFEESMSEKCREALTTRQKLIAQDYKVSYSLAKSCKSDLKKYRCNVENLPRSREARLSYLLMCLESAVHRGRQVSSECQGEMLDYRRMLMEDFSLSPEIILSCRGEIEHHCSGLHRKGRTLHCLMKVVRGEKGSLGMNCQQALQTLIQETDPGADYRIDRALNEACESVIQTACKHIRSGDPMILSCLMEHLYTEKMVEDCEHRLLELQYFISRDWKLDPVLYRKCQGDASRLCHTHGWNETSELMPPGAVFSCLYRHAYRTEEQGRRLSRECRAEVQRILHQRAMDVKLDPALQDKCLIDLGKWCSEKTETGQELECLQDHLDDLAVECRDIVGNLTELESEDIQIEALLMRACEPIIHNFCHDVADNQIDSGDLMECLIQNKHQKDMNEKCAIGVTHFQLVQMKDFRFSYKFKMACKEDVLKLCPNIKKKVDVVICLSTTVRNDTLQEAKEHRVSLKCRKQLRVEELEMTEDIRLEPDLYEACKSDIKNYCSTVQYGNAQIIECLKENKKQLSTRCHQRVFKLQETEMMDPELDYTLMRVCKQMIKRFCPEADSKTMLQCLKQNKNSELMDPKCKQMITKRQITQNTDYRLNPVLRKACKADIPKFCHGILTKAKDDSELEGQVISCLKLRYADQRLSSDCEDQIRIITQESALDYRLDPQLQLHCSDEIANLCAEEAAAQEQTGQVEECLKVNLLKIRTELCKKEVLNMLKESKADIFVDPVLHTACALDIKHHCAAITPGRGRQMSCLMEALEDKRVRLQPECKKRLNDRIEMWSYAAKVAPADGFSDLAMQVMTSPSKNYILSVISGSICILFLIGLMCGRITKRVTRELKDR</sequence>
<proteinExistence type="evidence at protein level"/>